<gene>
    <name type="primary">slc39a1</name>
    <name type="synonym">zip1</name>
</gene>
<comment type="function">
    <text evidence="1">Transporter for the divalent cation Zn(2+). Mediates the influx of Zn(2+) into cells from extracellular space.</text>
</comment>
<comment type="catalytic activity">
    <reaction evidence="1">
        <text>Zn(2+)(in) = Zn(2+)(out)</text>
        <dbReference type="Rhea" id="RHEA:29351"/>
        <dbReference type="ChEBI" id="CHEBI:29105"/>
    </reaction>
    <physiologicalReaction direction="left-to-right" evidence="1">
        <dbReference type="Rhea" id="RHEA:29352"/>
    </physiologicalReaction>
</comment>
<comment type="subcellular location">
    <subcellularLocation>
        <location evidence="1">Cell membrane</location>
        <topology evidence="2">Multi-pass membrane protein</topology>
    </subcellularLocation>
    <subcellularLocation>
        <location evidence="1">Endoplasmic reticulum membrane</location>
        <topology evidence="2">Multi-pass membrane protein</topology>
    </subcellularLocation>
    <text evidence="1">Shows a vesicular localization corresponding partially to the endoplasmic reticulum in several epithelial cell lines.</text>
</comment>
<comment type="tissue specificity">
    <text evidence="4">Highest levels in ovary, lower levels in intestine and gill, barely detected in kidney.</text>
</comment>
<comment type="similarity">
    <text evidence="2">Belongs to the ZIP transporter (TC 2.A.5) family.</text>
</comment>
<keyword id="KW-1003">Cell membrane</keyword>
<keyword id="KW-0256">Endoplasmic reticulum</keyword>
<keyword id="KW-0406">Ion transport</keyword>
<keyword id="KW-0472">Membrane</keyword>
<keyword id="KW-1185">Reference proteome</keyword>
<keyword id="KW-0812">Transmembrane</keyword>
<keyword id="KW-1133">Transmembrane helix</keyword>
<keyword id="KW-0813">Transport</keyword>
<keyword id="KW-0862">Zinc</keyword>
<keyword id="KW-0864">Zinc transport</keyword>
<name>S39A1_TAKRU</name>
<protein>
    <recommendedName>
        <fullName>Zinc transporter ZIP1</fullName>
    </recommendedName>
    <alternativeName>
        <fullName>Solute carrier family 39 member 1</fullName>
    </alternativeName>
    <alternativeName>
        <fullName>Zrt- and Irt-like protein 1</fullName>
        <shortName>ZIP-1</shortName>
    </alternativeName>
</protein>
<sequence length="302" mass="33038">MEYLLQVKIAALVGLLFLTLIFGFIPARVKWFRDTDGTETHRTVLSLISCFAGGVFLSACFLDIIPDYLSDINTELHARQLETSFPLPEFIMAAGFFTVLILERIVLNCKEMRATHEERTTLIPERKSGHGHGHGDGPDPESSGHHVHVDFQAHSPFRSFMLFLSLSLHSIFEGLAIGLQTTDPKVVEICIAILVHKSIIVFSLAVKLVQSAIPPLWVAAYIGVFALMSPVGIAIGISVMEAQLAAGPLIQAILEGFAAGTFVYITFLEILPHELNSPGKQLLKVLFLLLGFSIMAALSFLG</sequence>
<reference evidence="5 6" key="1">
    <citation type="journal article" date="2005" name="Biochem. J.">
        <title>Molecular cloning and functional characterization of a high-affinity zinc importer (DrZIP1) from zebrafish (Danio rerio).</title>
        <authorList>
            <person name="Qiu A."/>
            <person name="Shayeghi M."/>
            <person name="Hogstrand C."/>
        </authorList>
    </citation>
    <scope>NUCLEOTIDE SEQUENCE [MRNA]</scope>
    <scope>TISSUE SPECIFICITY</scope>
    <source>
        <tissue evidence="4">Gill</tissue>
    </source>
</reference>
<feature type="chain" id="PRO_0000068766" description="Zinc transporter ZIP1">
    <location>
        <begin position="1"/>
        <end position="302"/>
    </location>
</feature>
<feature type="topological domain" description="Extracellular" evidence="2">
    <location>
        <begin position="1"/>
        <end position="6"/>
    </location>
</feature>
<feature type="transmembrane region" description="Helical" evidence="2">
    <location>
        <begin position="7"/>
        <end position="27"/>
    </location>
</feature>
<feature type="topological domain" description="Cytoplasmic" evidence="2">
    <location>
        <begin position="28"/>
        <end position="44"/>
    </location>
</feature>
<feature type="transmembrane region" description="Helical" evidence="2">
    <location>
        <begin position="45"/>
        <end position="65"/>
    </location>
</feature>
<feature type="topological domain" description="Extracellular" evidence="2">
    <location>
        <begin position="66"/>
        <end position="80"/>
    </location>
</feature>
<feature type="transmembrane region" description="Helical" evidence="2">
    <location>
        <begin position="81"/>
        <end position="101"/>
    </location>
</feature>
<feature type="topological domain" description="Cytoplasmic" evidence="2">
    <location>
        <begin position="102"/>
        <end position="158"/>
    </location>
</feature>
<feature type="transmembrane region" description="Helical" evidence="2">
    <location>
        <begin position="159"/>
        <end position="179"/>
    </location>
</feature>
<feature type="topological domain" description="Extracellular" evidence="2">
    <location>
        <begin position="180"/>
        <end position="185"/>
    </location>
</feature>
<feature type="transmembrane region" description="Helical" evidence="2">
    <location>
        <begin position="186"/>
        <end position="206"/>
    </location>
</feature>
<feature type="topological domain" description="Cytoplasmic" evidence="2">
    <location>
        <begin position="207"/>
        <end position="216"/>
    </location>
</feature>
<feature type="transmembrane region" description="Helical" evidence="2">
    <location>
        <begin position="217"/>
        <end position="237"/>
    </location>
</feature>
<feature type="topological domain" description="Extracellular" evidence="2">
    <location>
        <begin position="238"/>
        <end position="251"/>
    </location>
</feature>
<feature type="transmembrane region" description="Helical" evidence="2">
    <location>
        <begin position="252"/>
        <end position="272"/>
    </location>
</feature>
<feature type="topological domain" description="Cytoplasmic" evidence="2">
    <location>
        <begin position="273"/>
        <end position="281"/>
    </location>
</feature>
<feature type="transmembrane region" description="Helical" evidence="2">
    <location>
        <begin position="282"/>
        <end position="302"/>
    </location>
</feature>
<feature type="region of interest" description="Disordered" evidence="3">
    <location>
        <begin position="123"/>
        <end position="145"/>
    </location>
</feature>
<proteinExistence type="evidence at transcript level"/>
<organism>
    <name type="scientific">Takifugu rubripes</name>
    <name type="common">Japanese pufferfish</name>
    <name type="synonym">Fugu rubripes</name>
    <dbReference type="NCBI Taxonomy" id="31033"/>
    <lineage>
        <taxon>Eukaryota</taxon>
        <taxon>Metazoa</taxon>
        <taxon>Chordata</taxon>
        <taxon>Craniata</taxon>
        <taxon>Vertebrata</taxon>
        <taxon>Euteleostomi</taxon>
        <taxon>Actinopterygii</taxon>
        <taxon>Neopterygii</taxon>
        <taxon>Teleostei</taxon>
        <taxon>Neoteleostei</taxon>
        <taxon>Acanthomorphata</taxon>
        <taxon>Eupercaria</taxon>
        <taxon>Tetraodontiformes</taxon>
        <taxon>Tetradontoidea</taxon>
        <taxon>Tetraodontidae</taxon>
        <taxon>Takifugu</taxon>
    </lineage>
</organism>
<evidence type="ECO:0000250" key="1">
    <source>
        <dbReference type="UniProtKB" id="Q9NY26"/>
    </source>
</evidence>
<evidence type="ECO:0000255" key="2"/>
<evidence type="ECO:0000256" key="3">
    <source>
        <dbReference type="SAM" id="MobiDB-lite"/>
    </source>
</evidence>
<evidence type="ECO:0000269" key="4">
    <source>
    </source>
</evidence>
<evidence type="ECO:0000305" key="5"/>
<evidence type="ECO:0000312" key="6">
    <source>
        <dbReference type="EMBL" id="AAS21267.1"/>
    </source>
</evidence>
<dbReference type="EMBL" id="AY529485">
    <property type="protein sequence ID" value="AAS21267.1"/>
    <property type="molecule type" value="mRNA"/>
</dbReference>
<dbReference type="RefSeq" id="NP_001027873.1">
    <property type="nucleotide sequence ID" value="NM_001032701.1"/>
</dbReference>
<dbReference type="SMR" id="Q6QQT1"/>
<dbReference type="FunCoup" id="Q6QQT1">
    <property type="interactions" value="1099"/>
</dbReference>
<dbReference type="STRING" id="31033.ENSTRUP00000043244"/>
<dbReference type="GeneID" id="446094"/>
<dbReference type="KEGG" id="tru:446094"/>
<dbReference type="CTD" id="27173"/>
<dbReference type="eggNOG" id="KOG1558">
    <property type="taxonomic scope" value="Eukaryota"/>
</dbReference>
<dbReference type="InParanoid" id="Q6QQT1"/>
<dbReference type="OrthoDB" id="448280at2759"/>
<dbReference type="Proteomes" id="UP000005226">
    <property type="component" value="Unplaced"/>
</dbReference>
<dbReference type="GO" id="GO:0005789">
    <property type="term" value="C:endoplasmic reticulum membrane"/>
    <property type="evidence" value="ECO:0007669"/>
    <property type="project" value="UniProtKB-SubCell"/>
</dbReference>
<dbReference type="GO" id="GO:0005886">
    <property type="term" value="C:plasma membrane"/>
    <property type="evidence" value="ECO:0000250"/>
    <property type="project" value="UniProtKB"/>
</dbReference>
<dbReference type="GO" id="GO:0005385">
    <property type="term" value="F:zinc ion transmembrane transporter activity"/>
    <property type="evidence" value="ECO:0007669"/>
    <property type="project" value="TreeGrafter"/>
</dbReference>
<dbReference type="GO" id="GO:0071577">
    <property type="term" value="P:zinc ion transmembrane transport"/>
    <property type="evidence" value="ECO:0000250"/>
    <property type="project" value="UniProtKB"/>
</dbReference>
<dbReference type="InterPro" id="IPR003689">
    <property type="entry name" value="ZIP"/>
</dbReference>
<dbReference type="PANTHER" id="PTHR11040:SF120">
    <property type="entry name" value="ZINC TRANSPORTER ZIP2"/>
    <property type="match status" value="1"/>
</dbReference>
<dbReference type="PANTHER" id="PTHR11040">
    <property type="entry name" value="ZINC/IRON TRANSPORTER"/>
    <property type="match status" value="1"/>
</dbReference>
<dbReference type="Pfam" id="PF02535">
    <property type="entry name" value="Zip"/>
    <property type="match status" value="1"/>
</dbReference>
<accession>Q6QQT1</accession>